<protein>
    <recommendedName>
        <fullName>Zinc finger protein 544</fullName>
    </recommendedName>
</protein>
<evidence type="ECO:0000255" key="1">
    <source>
        <dbReference type="PROSITE-ProRule" id="PRU00042"/>
    </source>
</evidence>
<evidence type="ECO:0000255" key="2">
    <source>
        <dbReference type="PROSITE-ProRule" id="PRU00119"/>
    </source>
</evidence>
<evidence type="ECO:0000269" key="3">
    <source>
    </source>
</evidence>
<evidence type="ECO:0000269" key="4">
    <source ref="1"/>
</evidence>
<evidence type="ECO:0000269" key="5">
    <source ref="3"/>
</evidence>
<evidence type="ECO:0000305" key="6"/>
<evidence type="ECO:0007744" key="7">
    <source>
    </source>
</evidence>
<evidence type="ECO:0007744" key="8">
    <source>
    </source>
</evidence>
<organism>
    <name type="scientific">Homo sapiens</name>
    <name type="common">Human</name>
    <dbReference type="NCBI Taxonomy" id="9606"/>
    <lineage>
        <taxon>Eukaryota</taxon>
        <taxon>Metazoa</taxon>
        <taxon>Chordata</taxon>
        <taxon>Craniata</taxon>
        <taxon>Vertebrata</taxon>
        <taxon>Euteleostomi</taxon>
        <taxon>Mammalia</taxon>
        <taxon>Eutheria</taxon>
        <taxon>Euarchontoglires</taxon>
        <taxon>Primates</taxon>
        <taxon>Haplorrhini</taxon>
        <taxon>Catarrhini</taxon>
        <taxon>Hominidae</taxon>
        <taxon>Homo</taxon>
    </lineage>
</organism>
<feature type="chain" id="PRO_0000047643" description="Zinc finger protein 544">
    <location>
        <begin position="1"/>
        <end position="715"/>
    </location>
</feature>
<feature type="domain" description="KRAB" evidence="2">
    <location>
        <begin position="14"/>
        <end position="85"/>
    </location>
</feature>
<feature type="zinc finger region" description="C2H2-type 1; atypical" evidence="1">
    <location>
        <begin position="354"/>
        <end position="374"/>
    </location>
</feature>
<feature type="zinc finger region" description="C2H2-type 2" evidence="1">
    <location>
        <begin position="380"/>
        <end position="402"/>
    </location>
</feature>
<feature type="zinc finger region" description="C2H2-type 3" evidence="1">
    <location>
        <begin position="408"/>
        <end position="430"/>
    </location>
</feature>
<feature type="zinc finger region" description="C2H2-type 4" evidence="1">
    <location>
        <begin position="436"/>
        <end position="458"/>
    </location>
</feature>
<feature type="zinc finger region" description="C2H2-type 5" evidence="1">
    <location>
        <begin position="464"/>
        <end position="486"/>
    </location>
</feature>
<feature type="zinc finger region" description="C2H2-type 6" evidence="1">
    <location>
        <begin position="492"/>
        <end position="514"/>
    </location>
</feature>
<feature type="zinc finger region" description="C2H2-type 7" evidence="1">
    <location>
        <begin position="520"/>
        <end position="542"/>
    </location>
</feature>
<feature type="zinc finger region" description="C2H2-type 8" evidence="1">
    <location>
        <begin position="548"/>
        <end position="570"/>
    </location>
</feature>
<feature type="zinc finger region" description="C2H2-type 9" evidence="1">
    <location>
        <begin position="576"/>
        <end position="598"/>
    </location>
</feature>
<feature type="zinc finger region" description="C2H2-type 10" evidence="1">
    <location>
        <begin position="604"/>
        <end position="626"/>
    </location>
</feature>
<feature type="zinc finger region" description="C2H2-type 11" evidence="1">
    <location>
        <begin position="632"/>
        <end position="654"/>
    </location>
</feature>
<feature type="zinc finger region" description="C2H2-type 12" evidence="1">
    <location>
        <begin position="660"/>
        <end position="682"/>
    </location>
</feature>
<feature type="zinc finger region" description="C2H2-type 13" evidence="1">
    <location>
        <begin position="688"/>
        <end position="710"/>
    </location>
</feature>
<feature type="cross-link" description="Glycyl lysine isopeptide (Lys-Gly) (interchain with G-Cter in SUMO2)" evidence="8">
    <location>
        <position position="273"/>
    </location>
</feature>
<feature type="cross-link" description="Glycyl lysine isopeptide (Lys-Gly) (interchain with G-Cter in SUMO2)" evidence="8">
    <location>
        <position position="289"/>
    </location>
</feature>
<feature type="cross-link" description="Glycyl lysine isopeptide (Lys-Gly) (interchain with G-Cter in SUMO2)" evidence="7 8">
    <location>
        <position position="534"/>
    </location>
</feature>
<feature type="sequence variant" id="VAR_052859" description="In dbSNP:rs6510130.">
    <original>H</original>
    <variation>D</variation>
    <location>
        <position position="203"/>
    </location>
</feature>
<feature type="sequence variant" id="VAR_052860" description="In dbSNP:rs260462." evidence="3 4 5">
    <original>Q</original>
    <variation>R</variation>
    <location>
        <position position="700"/>
    </location>
</feature>
<feature type="sequence conflict" description="In Ref. 1; AAC01956." evidence="6" ref="1">
    <original>T</original>
    <variation>P</variation>
    <location>
        <position position="86"/>
    </location>
</feature>
<feature type="sequence conflict" description="In Ref. 1; AAC01956." evidence="6" ref="1">
    <original>R</original>
    <variation>G</variation>
    <location>
        <position position="91"/>
    </location>
</feature>
<feature type="sequence conflict" description="In Ref. 1; AAC01956." evidence="6" ref="1">
    <original>Q</original>
    <variation>L</variation>
    <location>
        <position position="348"/>
    </location>
</feature>
<feature type="sequence conflict" description="In Ref. 1; AAC01956." evidence="6" ref="1">
    <original>R</original>
    <variation>T</variation>
    <location>
        <position position="446"/>
    </location>
</feature>
<feature type="sequence conflict" description="In Ref. 1; AAC01956." evidence="6" ref="1">
    <original>Q</original>
    <variation>R</variation>
    <location>
        <position position="590"/>
    </location>
</feature>
<proteinExistence type="evidence at protein level"/>
<keyword id="KW-0238">DNA-binding</keyword>
<keyword id="KW-1017">Isopeptide bond</keyword>
<keyword id="KW-0479">Metal-binding</keyword>
<keyword id="KW-0539">Nucleus</keyword>
<keyword id="KW-1267">Proteomics identification</keyword>
<keyword id="KW-1185">Reference proteome</keyword>
<keyword id="KW-0677">Repeat</keyword>
<keyword id="KW-0804">Transcription</keyword>
<keyword id="KW-0805">Transcription regulation</keyword>
<keyword id="KW-0832">Ubl conjugation</keyword>
<keyword id="KW-0862">Zinc</keyword>
<keyword id="KW-0863">Zinc-finger</keyword>
<name>ZN544_HUMAN</name>
<reference key="1">
    <citation type="submission" date="1998-02" db="EMBL/GenBank/DDBJ databases">
        <title>Cloning of a novel human gene coding a zinc finger protein.</title>
        <authorList>
            <person name="Hu P."/>
            <person name="Yu L."/>
            <person name="Zhang M."/>
        </authorList>
    </citation>
    <scope>NUCLEOTIDE SEQUENCE [MRNA]</scope>
    <scope>VARIANT ARG-700</scope>
</reference>
<reference key="2">
    <citation type="journal article" date="2004" name="Nat. Genet.">
        <title>Complete sequencing and characterization of 21,243 full-length human cDNAs.</title>
        <authorList>
            <person name="Ota T."/>
            <person name="Suzuki Y."/>
            <person name="Nishikawa T."/>
            <person name="Otsuki T."/>
            <person name="Sugiyama T."/>
            <person name="Irie R."/>
            <person name="Wakamatsu A."/>
            <person name="Hayashi K."/>
            <person name="Sato H."/>
            <person name="Nagai K."/>
            <person name="Kimura K."/>
            <person name="Makita H."/>
            <person name="Sekine M."/>
            <person name="Obayashi M."/>
            <person name="Nishi T."/>
            <person name="Shibahara T."/>
            <person name="Tanaka T."/>
            <person name="Ishii S."/>
            <person name="Yamamoto J."/>
            <person name="Saito K."/>
            <person name="Kawai Y."/>
            <person name="Isono Y."/>
            <person name="Nakamura Y."/>
            <person name="Nagahari K."/>
            <person name="Murakami K."/>
            <person name="Yasuda T."/>
            <person name="Iwayanagi T."/>
            <person name="Wagatsuma M."/>
            <person name="Shiratori A."/>
            <person name="Sudo H."/>
            <person name="Hosoiri T."/>
            <person name="Kaku Y."/>
            <person name="Kodaira H."/>
            <person name="Kondo H."/>
            <person name="Sugawara M."/>
            <person name="Takahashi M."/>
            <person name="Kanda K."/>
            <person name="Yokoi T."/>
            <person name="Furuya T."/>
            <person name="Kikkawa E."/>
            <person name="Omura Y."/>
            <person name="Abe K."/>
            <person name="Kamihara K."/>
            <person name="Katsuta N."/>
            <person name="Sato K."/>
            <person name="Tanikawa M."/>
            <person name="Yamazaki M."/>
            <person name="Ninomiya K."/>
            <person name="Ishibashi T."/>
            <person name="Yamashita H."/>
            <person name="Murakawa K."/>
            <person name="Fujimori K."/>
            <person name="Tanai H."/>
            <person name="Kimata M."/>
            <person name="Watanabe M."/>
            <person name="Hiraoka S."/>
            <person name="Chiba Y."/>
            <person name="Ishida S."/>
            <person name="Ono Y."/>
            <person name="Takiguchi S."/>
            <person name="Watanabe S."/>
            <person name="Yosida M."/>
            <person name="Hotuta T."/>
            <person name="Kusano J."/>
            <person name="Kanehori K."/>
            <person name="Takahashi-Fujii A."/>
            <person name="Hara H."/>
            <person name="Tanase T.-O."/>
            <person name="Nomura Y."/>
            <person name="Togiya S."/>
            <person name="Komai F."/>
            <person name="Hara R."/>
            <person name="Takeuchi K."/>
            <person name="Arita M."/>
            <person name="Imose N."/>
            <person name="Musashino K."/>
            <person name="Yuuki H."/>
            <person name="Oshima A."/>
            <person name="Sasaki N."/>
            <person name="Aotsuka S."/>
            <person name="Yoshikawa Y."/>
            <person name="Matsunawa H."/>
            <person name="Ichihara T."/>
            <person name="Shiohata N."/>
            <person name="Sano S."/>
            <person name="Moriya S."/>
            <person name="Momiyama H."/>
            <person name="Satoh N."/>
            <person name="Takami S."/>
            <person name="Terashima Y."/>
            <person name="Suzuki O."/>
            <person name="Nakagawa S."/>
            <person name="Senoh A."/>
            <person name="Mizoguchi H."/>
            <person name="Goto Y."/>
            <person name="Shimizu F."/>
            <person name="Wakebe H."/>
            <person name="Hishigaki H."/>
            <person name="Watanabe T."/>
            <person name="Sugiyama A."/>
            <person name="Takemoto M."/>
            <person name="Kawakami B."/>
            <person name="Yamazaki M."/>
            <person name="Watanabe K."/>
            <person name="Kumagai A."/>
            <person name="Itakura S."/>
            <person name="Fukuzumi Y."/>
            <person name="Fujimori Y."/>
            <person name="Komiyama M."/>
            <person name="Tashiro H."/>
            <person name="Tanigami A."/>
            <person name="Fujiwara T."/>
            <person name="Ono T."/>
            <person name="Yamada K."/>
            <person name="Fujii Y."/>
            <person name="Ozaki K."/>
            <person name="Hirao M."/>
            <person name="Ohmori Y."/>
            <person name="Kawabata A."/>
            <person name="Hikiji T."/>
            <person name="Kobatake N."/>
            <person name="Inagaki H."/>
            <person name="Ikema Y."/>
            <person name="Okamoto S."/>
            <person name="Okitani R."/>
            <person name="Kawakami T."/>
            <person name="Noguchi S."/>
            <person name="Itoh T."/>
            <person name="Shigeta K."/>
            <person name="Senba T."/>
            <person name="Matsumura K."/>
            <person name="Nakajima Y."/>
            <person name="Mizuno T."/>
            <person name="Morinaga M."/>
            <person name="Sasaki M."/>
            <person name="Togashi T."/>
            <person name="Oyama M."/>
            <person name="Hata H."/>
            <person name="Watanabe M."/>
            <person name="Komatsu T."/>
            <person name="Mizushima-Sugano J."/>
            <person name="Satoh T."/>
            <person name="Shirai Y."/>
            <person name="Takahashi Y."/>
            <person name="Nakagawa K."/>
            <person name="Okumura K."/>
            <person name="Nagase T."/>
            <person name="Nomura N."/>
            <person name="Kikuchi H."/>
            <person name="Masuho Y."/>
            <person name="Yamashita R."/>
            <person name="Nakai K."/>
            <person name="Yada T."/>
            <person name="Nakamura Y."/>
            <person name="Ohara O."/>
            <person name="Isogai T."/>
            <person name="Sugano S."/>
        </authorList>
    </citation>
    <scope>NUCLEOTIDE SEQUENCE [LARGE SCALE MRNA]</scope>
    <scope>VARIANT ARG-700</scope>
    <source>
        <tissue>Placenta</tissue>
    </source>
</reference>
<reference key="3">
    <citation type="submission" date="2005-07" db="EMBL/GenBank/DDBJ databases">
        <authorList>
            <person name="Mural R.J."/>
            <person name="Istrail S."/>
            <person name="Sutton G.G."/>
            <person name="Florea L."/>
            <person name="Halpern A.L."/>
            <person name="Mobarry C.M."/>
            <person name="Lippert R."/>
            <person name="Walenz B."/>
            <person name="Shatkay H."/>
            <person name="Dew I."/>
            <person name="Miller J.R."/>
            <person name="Flanigan M.J."/>
            <person name="Edwards N.J."/>
            <person name="Bolanos R."/>
            <person name="Fasulo D."/>
            <person name="Halldorsson B.V."/>
            <person name="Hannenhalli S."/>
            <person name="Turner R."/>
            <person name="Yooseph S."/>
            <person name="Lu F."/>
            <person name="Nusskern D.R."/>
            <person name="Shue B.C."/>
            <person name="Zheng X.H."/>
            <person name="Zhong F."/>
            <person name="Delcher A.L."/>
            <person name="Huson D.H."/>
            <person name="Kravitz S.A."/>
            <person name="Mouchard L."/>
            <person name="Reinert K."/>
            <person name="Remington K.A."/>
            <person name="Clark A.G."/>
            <person name="Waterman M.S."/>
            <person name="Eichler E.E."/>
            <person name="Adams M.D."/>
            <person name="Hunkapiller M.W."/>
            <person name="Myers E.W."/>
            <person name="Venter J.C."/>
        </authorList>
    </citation>
    <scope>NUCLEOTIDE SEQUENCE [LARGE SCALE GENOMIC DNA]</scope>
    <scope>VARIANT ARG-700</scope>
</reference>
<reference key="4">
    <citation type="journal article" date="2004" name="Genome Res.">
        <title>The status, quality, and expansion of the NIH full-length cDNA project: the Mammalian Gene Collection (MGC).</title>
        <authorList>
            <consortium name="The MGC Project Team"/>
        </authorList>
    </citation>
    <scope>NUCLEOTIDE SEQUENCE [LARGE SCALE MRNA]</scope>
    <source>
        <tissue>PNS</tissue>
    </source>
</reference>
<reference key="5">
    <citation type="journal article" date="2014" name="Nat. Struct. Mol. Biol.">
        <title>Uncovering global SUMOylation signaling networks in a site-specific manner.</title>
        <authorList>
            <person name="Hendriks I.A."/>
            <person name="D'Souza R.C."/>
            <person name="Yang B."/>
            <person name="Verlaan-de Vries M."/>
            <person name="Mann M."/>
            <person name="Vertegaal A.C."/>
        </authorList>
    </citation>
    <scope>SUMOYLATION [LARGE SCALE ANALYSIS] AT LYS-534</scope>
    <scope>IDENTIFICATION BY MASS SPECTROMETRY [LARGE SCALE ANALYSIS]</scope>
</reference>
<reference key="6">
    <citation type="journal article" date="2017" name="Nat. Struct. Mol. Biol.">
        <title>Site-specific mapping of the human SUMO proteome reveals co-modification with phosphorylation.</title>
        <authorList>
            <person name="Hendriks I.A."/>
            <person name="Lyon D."/>
            <person name="Young C."/>
            <person name="Jensen L.J."/>
            <person name="Vertegaal A.C."/>
            <person name="Nielsen M.L."/>
        </authorList>
    </citation>
    <scope>SUMOYLATION [LARGE SCALE ANALYSIS] AT LYS-273; LYS-289 AND LYS-534</scope>
    <scope>IDENTIFICATION BY MASS SPECTROMETRY [LARGE SCALE ANALYSIS]</scope>
</reference>
<sequence length="715" mass="81742">MEARSMLVPPQASVCFEDVAMAFTQEEWEQLDLAQRTLYREVTLETWEHIVSLGLFLSKSDVISQLEQEEDLCRAEQEAPRDWKATLEENRLNSEKDRAREELSHHVEVYRSGPEEPPSLVLGKVQDQSNQLREHQENSLRFMVLTSERLFAQREHCELELGGGYSLPSTLSLLPTTLPTSTGFPKPNSQVKELKQNSAFINHEKNGADGKHCESHQCARAFCQSIYLSKLGNVETGKKNPYEYIVSGDSLNYGSSLCFHGRTFSVKKSDDCKDYGNLFSHSVSLNEQKPVHFGKSQYECDECRETCSESLCLVQTERSGPGETPFRCEERCAAFPMASSFSDCNIIQTTEKPSVCNQCGKSFSCCKLIHQRTHTGEKPFECTQCGKSFSQSYDLVIHQRTHTGEKPYECDLCGKSFTQRSKLITHQRIHTGEKPYQCIECRKSFRWNSNLIVHQRIHTGEKPYECTHCGKSFSQSYELVTHKRTHTGEKPFKCTQCGKSFSQKYDLVVHQRTHTGEKPYECNLCGKSFSQSSKLITHQRIHTGEKPYQCIECGKSFRWNSNLVIHQRIHTGEKPYDCTHCGKSFSQSYQLVAHKRTHTGEKPYECNECGKAFNRSTQLIRHLQIHTGEKPYKCNQCNKAFARSSYLVMHQRTHTGEKPFECSQCGKAFSGSSNLLSHHRIHSGEKPYECSDCGKSFRQQSQLVVHRRTHTGEKP</sequence>
<dbReference type="EMBL" id="AF020591">
    <property type="protein sequence ID" value="AAC01956.1"/>
    <property type="molecule type" value="mRNA"/>
</dbReference>
<dbReference type="EMBL" id="AK291656">
    <property type="protein sequence ID" value="BAF84345.1"/>
    <property type="molecule type" value="mRNA"/>
</dbReference>
<dbReference type="EMBL" id="CH471135">
    <property type="protein sequence ID" value="EAW72568.1"/>
    <property type="molecule type" value="Genomic_DNA"/>
</dbReference>
<dbReference type="EMBL" id="BC067271">
    <property type="protein sequence ID" value="AAH67271.1"/>
    <property type="molecule type" value="mRNA"/>
</dbReference>
<dbReference type="CCDS" id="CCDS12973.1"/>
<dbReference type="RefSeq" id="NP_001307696.1">
    <property type="nucleotide sequence ID" value="NM_001320767.2"/>
</dbReference>
<dbReference type="RefSeq" id="NP_001307698.1">
    <property type="nucleotide sequence ID" value="NM_001320769.2"/>
</dbReference>
<dbReference type="RefSeq" id="NP_001307699.1">
    <property type="nucleotide sequence ID" value="NM_001320770.1"/>
</dbReference>
<dbReference type="RefSeq" id="NP_001307700.1">
    <property type="nucleotide sequence ID" value="NM_001320771.1"/>
</dbReference>
<dbReference type="RefSeq" id="NP_001307702.1">
    <property type="nucleotide sequence ID" value="NM_001320773.1"/>
</dbReference>
<dbReference type="RefSeq" id="NP_001307705.1">
    <property type="nucleotide sequence ID" value="NM_001320776.1"/>
</dbReference>
<dbReference type="RefSeq" id="NP_001307706.1">
    <property type="nucleotide sequence ID" value="NM_001320777.1"/>
</dbReference>
<dbReference type="RefSeq" id="NP_001307709.1">
    <property type="nucleotide sequence ID" value="NM_001320780.1"/>
</dbReference>
<dbReference type="RefSeq" id="NP_001307712.1">
    <property type="nucleotide sequence ID" value="NM_001320783.1"/>
</dbReference>
<dbReference type="RefSeq" id="NP_001307714.1">
    <property type="nucleotide sequence ID" value="NM_001320785.1"/>
</dbReference>
<dbReference type="RefSeq" id="NP_001307715.1">
    <property type="nucleotide sequence ID" value="NM_001320786.1"/>
</dbReference>
<dbReference type="RefSeq" id="NP_001307720.1">
    <property type="nucleotide sequence ID" value="NM_001320791.1"/>
</dbReference>
<dbReference type="RefSeq" id="NP_001374319.1">
    <property type="nucleotide sequence ID" value="NM_001387390.1"/>
</dbReference>
<dbReference type="RefSeq" id="NP_001374320.1">
    <property type="nucleotide sequence ID" value="NM_001387391.1"/>
</dbReference>
<dbReference type="RefSeq" id="NP_001374321.1">
    <property type="nucleotide sequence ID" value="NM_001387392.1"/>
</dbReference>
<dbReference type="RefSeq" id="NP_055295.2">
    <property type="nucleotide sequence ID" value="NM_014480.4"/>
</dbReference>
<dbReference type="SMR" id="Q6NX49"/>
<dbReference type="BioGRID" id="118123">
    <property type="interactions" value="16"/>
</dbReference>
<dbReference type="FunCoup" id="Q6NX49">
    <property type="interactions" value="12"/>
</dbReference>
<dbReference type="IntAct" id="Q6NX49">
    <property type="interactions" value="12"/>
</dbReference>
<dbReference type="MINT" id="Q6NX49"/>
<dbReference type="STRING" id="9606.ENSP00000269829"/>
<dbReference type="GlyCosmos" id="Q6NX49">
    <property type="glycosylation" value="1 site, 2 glycans"/>
</dbReference>
<dbReference type="GlyGen" id="Q6NX49">
    <property type="glycosylation" value="2 sites, 2 O-linked glycans (2 sites)"/>
</dbReference>
<dbReference type="iPTMnet" id="Q6NX49"/>
<dbReference type="PhosphoSitePlus" id="Q6NX49"/>
<dbReference type="BioMuta" id="ZNF544"/>
<dbReference type="DMDM" id="74762345"/>
<dbReference type="jPOST" id="Q6NX49"/>
<dbReference type="MassIVE" id="Q6NX49"/>
<dbReference type="PaxDb" id="9606-ENSP00000269829"/>
<dbReference type="PeptideAtlas" id="Q6NX49"/>
<dbReference type="ProteomicsDB" id="66747"/>
<dbReference type="Antibodypedia" id="1170">
    <property type="antibodies" value="70 antibodies from 19 providers"/>
</dbReference>
<dbReference type="DNASU" id="27300"/>
<dbReference type="Ensembl" id="ENST00000269829.5">
    <property type="protein sequence ID" value="ENSP00000269829.4"/>
    <property type="gene ID" value="ENSG00000198131.15"/>
</dbReference>
<dbReference type="Ensembl" id="ENST00000596652.5">
    <property type="protein sequence ID" value="ENSP00000469635.1"/>
    <property type="gene ID" value="ENSG00000198131.15"/>
</dbReference>
<dbReference type="Ensembl" id="ENST00000687789.1">
    <property type="protein sequence ID" value="ENSP00000510489.1"/>
    <property type="gene ID" value="ENSG00000198131.15"/>
</dbReference>
<dbReference type="GeneID" id="27300"/>
<dbReference type="KEGG" id="hsa:27300"/>
<dbReference type="MANE-Select" id="ENST00000687789.1">
    <property type="protein sequence ID" value="ENSP00000510489.1"/>
    <property type="RefSeq nucleotide sequence ID" value="NM_014480.4"/>
    <property type="RefSeq protein sequence ID" value="NP_055295.2"/>
</dbReference>
<dbReference type="UCSC" id="uc061dqq.1">
    <property type="organism name" value="human"/>
</dbReference>
<dbReference type="AGR" id="HGNC:16759"/>
<dbReference type="CTD" id="27300"/>
<dbReference type="DisGeNET" id="27300"/>
<dbReference type="GeneCards" id="ZNF544"/>
<dbReference type="HGNC" id="HGNC:16759">
    <property type="gene designation" value="ZNF544"/>
</dbReference>
<dbReference type="HPA" id="ENSG00000198131">
    <property type="expression patterns" value="Low tissue specificity"/>
</dbReference>
<dbReference type="neXtProt" id="NX_Q6NX49"/>
<dbReference type="OpenTargets" id="ENSG00000198131"/>
<dbReference type="PharmGKB" id="PA134871299"/>
<dbReference type="VEuPathDB" id="HostDB:ENSG00000198131"/>
<dbReference type="eggNOG" id="KOG1721">
    <property type="taxonomic scope" value="Eukaryota"/>
</dbReference>
<dbReference type="GeneTree" id="ENSGT00940000164425"/>
<dbReference type="InParanoid" id="Q6NX49"/>
<dbReference type="OMA" id="KPAVICW"/>
<dbReference type="OrthoDB" id="9831380at2759"/>
<dbReference type="PAN-GO" id="Q6NX49">
    <property type="GO annotations" value="4 GO annotations based on evolutionary models"/>
</dbReference>
<dbReference type="PhylomeDB" id="Q6NX49"/>
<dbReference type="TreeFam" id="TF341817"/>
<dbReference type="PathwayCommons" id="Q6NX49"/>
<dbReference type="Reactome" id="R-HSA-212436">
    <property type="pathway name" value="Generic Transcription Pathway"/>
</dbReference>
<dbReference type="SignaLink" id="Q6NX49"/>
<dbReference type="BioGRID-ORCS" id="27300">
    <property type="hits" value="9 hits in 1173 CRISPR screens"/>
</dbReference>
<dbReference type="ChiTaRS" id="ZNF544">
    <property type="organism name" value="human"/>
</dbReference>
<dbReference type="GenomeRNAi" id="27300"/>
<dbReference type="Pharos" id="Q6NX49">
    <property type="development level" value="Tdark"/>
</dbReference>
<dbReference type="PRO" id="PR:Q6NX49"/>
<dbReference type="Proteomes" id="UP000005640">
    <property type="component" value="Chromosome 19"/>
</dbReference>
<dbReference type="RNAct" id="Q6NX49">
    <property type="molecule type" value="protein"/>
</dbReference>
<dbReference type="Bgee" id="ENSG00000198131">
    <property type="expression patterns" value="Expressed in buccal mucosa cell and 200 other cell types or tissues"/>
</dbReference>
<dbReference type="ExpressionAtlas" id="Q6NX49">
    <property type="expression patterns" value="baseline and differential"/>
</dbReference>
<dbReference type="GO" id="GO:0005634">
    <property type="term" value="C:nucleus"/>
    <property type="evidence" value="ECO:0000318"/>
    <property type="project" value="GO_Central"/>
</dbReference>
<dbReference type="GO" id="GO:0003677">
    <property type="term" value="F:DNA binding"/>
    <property type="evidence" value="ECO:0007669"/>
    <property type="project" value="UniProtKB-KW"/>
</dbReference>
<dbReference type="GO" id="GO:0008270">
    <property type="term" value="F:zinc ion binding"/>
    <property type="evidence" value="ECO:0007669"/>
    <property type="project" value="UniProtKB-KW"/>
</dbReference>
<dbReference type="GO" id="GO:0006357">
    <property type="term" value="P:regulation of transcription by RNA polymerase II"/>
    <property type="evidence" value="ECO:0000318"/>
    <property type="project" value="GO_Central"/>
</dbReference>
<dbReference type="CDD" id="cd07765">
    <property type="entry name" value="KRAB_A-box"/>
    <property type="match status" value="1"/>
</dbReference>
<dbReference type="FunFam" id="3.30.160.60:FF:000478">
    <property type="entry name" value="Zinc finger protein 133"/>
    <property type="match status" value="1"/>
</dbReference>
<dbReference type="FunFam" id="3.30.160.60:FF:000506">
    <property type="entry name" value="Zinc finger protein 23"/>
    <property type="match status" value="1"/>
</dbReference>
<dbReference type="FunFam" id="3.30.160.60:FF:002343">
    <property type="entry name" value="Zinc finger protein 33A"/>
    <property type="match status" value="4"/>
</dbReference>
<dbReference type="FunFam" id="3.30.160.60:FF:000848">
    <property type="entry name" value="Zinc finger protein 35"/>
    <property type="match status" value="2"/>
</dbReference>
<dbReference type="FunFam" id="3.30.160.60:FF:002254">
    <property type="entry name" value="Zinc finger protein 540"/>
    <property type="match status" value="2"/>
</dbReference>
<dbReference type="FunFam" id="3.30.160.60:FF:000953">
    <property type="entry name" value="Zinc finger protein 691"/>
    <property type="match status" value="1"/>
</dbReference>
<dbReference type="FunFam" id="3.30.160.60:FF:000934">
    <property type="entry name" value="zinc finger protein 90 homolog"/>
    <property type="match status" value="1"/>
</dbReference>
<dbReference type="Gene3D" id="6.10.140.140">
    <property type="match status" value="1"/>
</dbReference>
<dbReference type="Gene3D" id="3.30.160.60">
    <property type="entry name" value="Classic Zinc Finger"/>
    <property type="match status" value="14"/>
</dbReference>
<dbReference type="InterPro" id="IPR001909">
    <property type="entry name" value="KRAB"/>
</dbReference>
<dbReference type="InterPro" id="IPR036051">
    <property type="entry name" value="KRAB_dom_sf"/>
</dbReference>
<dbReference type="InterPro" id="IPR056436">
    <property type="entry name" value="Znf-C2H2_ZIC1-5/GLI1-3-like"/>
</dbReference>
<dbReference type="InterPro" id="IPR036236">
    <property type="entry name" value="Znf_C2H2_sf"/>
</dbReference>
<dbReference type="InterPro" id="IPR013087">
    <property type="entry name" value="Znf_C2H2_type"/>
</dbReference>
<dbReference type="PANTHER" id="PTHR23235">
    <property type="entry name" value="KRUEPPEL-LIKE TRANSCRIPTION FACTOR"/>
    <property type="match status" value="1"/>
</dbReference>
<dbReference type="PANTHER" id="PTHR23235:SF142">
    <property type="entry name" value="ZINC FINGER PROTEIN 384"/>
    <property type="match status" value="1"/>
</dbReference>
<dbReference type="Pfam" id="PF01352">
    <property type="entry name" value="KRAB"/>
    <property type="match status" value="1"/>
</dbReference>
<dbReference type="Pfam" id="PF00096">
    <property type="entry name" value="zf-C2H2"/>
    <property type="match status" value="11"/>
</dbReference>
<dbReference type="Pfam" id="PF23561">
    <property type="entry name" value="zf-C2H2_15"/>
    <property type="match status" value="1"/>
</dbReference>
<dbReference type="SMART" id="SM00349">
    <property type="entry name" value="KRAB"/>
    <property type="match status" value="1"/>
</dbReference>
<dbReference type="SMART" id="SM00355">
    <property type="entry name" value="ZnF_C2H2"/>
    <property type="match status" value="12"/>
</dbReference>
<dbReference type="SUPFAM" id="SSF57667">
    <property type="entry name" value="beta-beta-alpha zinc fingers"/>
    <property type="match status" value="9"/>
</dbReference>
<dbReference type="SUPFAM" id="SSF109640">
    <property type="entry name" value="KRAB domain (Kruppel-associated box)"/>
    <property type="match status" value="1"/>
</dbReference>
<dbReference type="PROSITE" id="PS50805">
    <property type="entry name" value="KRAB"/>
    <property type="match status" value="1"/>
</dbReference>
<dbReference type="PROSITE" id="PS00028">
    <property type="entry name" value="ZINC_FINGER_C2H2_1"/>
    <property type="match status" value="12"/>
</dbReference>
<dbReference type="PROSITE" id="PS50157">
    <property type="entry name" value="ZINC_FINGER_C2H2_2"/>
    <property type="match status" value="13"/>
</dbReference>
<accession>Q6NX49</accession>
<accession>A8K6J1</accession>
<accession>Q9UEX4</accession>
<gene>
    <name type="primary">ZNF544</name>
</gene>
<comment type="function">
    <text>May be involved in transcriptional regulation.</text>
</comment>
<comment type="interaction">
    <interactant intactId="EBI-2841978">
        <id>Q6NX49</id>
    </interactant>
    <interactant intactId="EBI-374781">
        <id>O76003</id>
        <label>GLRX3</label>
    </interactant>
    <organismsDiffer>false</organismsDiffer>
    <experiments>3</experiments>
</comment>
<comment type="interaction">
    <interactant intactId="EBI-2841978">
        <id>Q6NX49</id>
    </interactant>
    <interactant intactId="EBI-928842">
        <id>Q9GZM8</id>
        <label>NDEL1</label>
    </interactant>
    <organismsDiffer>false</organismsDiffer>
    <experiments>5</experiments>
</comment>
<comment type="interaction">
    <interactant intactId="EBI-2841978">
        <id>Q6NX49</id>
    </interactant>
    <interactant intactId="EBI-355744">
        <id>Q12933</id>
        <label>TRAF2</label>
    </interactant>
    <organismsDiffer>false</organismsDiffer>
    <experiments>4</experiments>
</comment>
<comment type="interaction">
    <interactant intactId="EBI-2841978">
        <id>Q6NX49</id>
    </interactant>
    <interactant intactId="EBI-744794">
        <id>Q9BZW7</id>
        <label>TSGA10</label>
    </interactant>
    <organismsDiffer>false</organismsDiffer>
    <experiments>3</experiments>
</comment>
<comment type="subcellular location">
    <subcellularLocation>
        <location evidence="6">Nucleus</location>
    </subcellularLocation>
</comment>
<comment type="similarity">
    <text evidence="6">Belongs to the krueppel C2H2-type zinc-finger protein family.</text>
</comment>